<reference key="1">
    <citation type="journal article" date="2007" name="PLoS Biol.">
        <title>Evolution of symbiotic bacteria in the distal human intestine.</title>
        <authorList>
            <person name="Xu J."/>
            <person name="Mahowald M.A."/>
            <person name="Ley R.E."/>
            <person name="Lozupone C.A."/>
            <person name="Hamady M."/>
            <person name="Martens E.C."/>
            <person name="Henrissat B."/>
            <person name="Coutinho P.M."/>
            <person name="Minx P."/>
            <person name="Latreille P."/>
            <person name="Cordum H."/>
            <person name="Van Brunt A."/>
            <person name="Kim K."/>
            <person name="Fulton R.S."/>
            <person name="Fulton L.A."/>
            <person name="Clifton S.W."/>
            <person name="Wilson R.K."/>
            <person name="Knight R.D."/>
            <person name="Gordon J.I."/>
        </authorList>
    </citation>
    <scope>NUCLEOTIDE SEQUENCE [LARGE SCALE GENOMIC DNA]</scope>
    <source>
        <strain>ATCC 8503 / DSM 20701 / CIP 104284 / JCM 5825 / NCTC 11152</strain>
    </source>
</reference>
<sequence>MELLKQRILQDGRCYPGGILKVDSFINHQMDPMLMYKIAEEFIRRFQDRKINKIVTIEASGIAPAIMVGYIMQLPVVFVKKKKPKTMENMLSTVVHSFTKDRDYTVCISNNFLTPEDHILFIDDFLAYGNAAMGMVELAEQSGAVIEGMGFIIEKAFQDGGNLLREKGIRVESLAIIDNLDDCKITVR</sequence>
<protein>
    <recommendedName>
        <fullName evidence="1">Xanthine phosphoribosyltransferase</fullName>
        <shortName evidence="1">XPRTase</shortName>
        <ecNumber evidence="1">2.4.2.22</ecNumber>
    </recommendedName>
</protein>
<dbReference type="EC" id="2.4.2.22" evidence="1"/>
<dbReference type="EMBL" id="CP000140">
    <property type="protein sequence ID" value="ABR43257.1"/>
    <property type="molecule type" value="Genomic_DNA"/>
</dbReference>
<dbReference type="RefSeq" id="WP_005855972.1">
    <property type="nucleotide sequence ID" value="NZ_LR215978.1"/>
</dbReference>
<dbReference type="SMR" id="A6LC43"/>
<dbReference type="STRING" id="435591.BDI_1502"/>
<dbReference type="PaxDb" id="435591-BDI_1502"/>
<dbReference type="GeneID" id="93525203"/>
<dbReference type="KEGG" id="pdi:BDI_1502"/>
<dbReference type="eggNOG" id="COG0503">
    <property type="taxonomic scope" value="Bacteria"/>
</dbReference>
<dbReference type="HOGENOM" id="CLU_099015_0_0_10"/>
<dbReference type="BioCyc" id="PDIS435591:G1G5A-1543-MONOMER"/>
<dbReference type="UniPathway" id="UPA00602">
    <property type="reaction ID" value="UER00658"/>
</dbReference>
<dbReference type="Proteomes" id="UP000000566">
    <property type="component" value="Chromosome"/>
</dbReference>
<dbReference type="GO" id="GO:0005737">
    <property type="term" value="C:cytoplasm"/>
    <property type="evidence" value="ECO:0007669"/>
    <property type="project" value="UniProtKB-SubCell"/>
</dbReference>
<dbReference type="GO" id="GO:0000310">
    <property type="term" value="F:xanthine phosphoribosyltransferase activity"/>
    <property type="evidence" value="ECO:0007669"/>
    <property type="project" value="UniProtKB-UniRule"/>
</dbReference>
<dbReference type="GO" id="GO:0006166">
    <property type="term" value="P:purine ribonucleoside salvage"/>
    <property type="evidence" value="ECO:0007669"/>
    <property type="project" value="UniProtKB-KW"/>
</dbReference>
<dbReference type="GO" id="GO:0046110">
    <property type="term" value="P:xanthine metabolic process"/>
    <property type="evidence" value="ECO:0007669"/>
    <property type="project" value="InterPro"/>
</dbReference>
<dbReference type="GO" id="GO:0032265">
    <property type="term" value="P:XMP salvage"/>
    <property type="evidence" value="ECO:0007669"/>
    <property type="project" value="UniProtKB-UniRule"/>
</dbReference>
<dbReference type="Gene3D" id="3.40.50.2020">
    <property type="match status" value="1"/>
</dbReference>
<dbReference type="HAMAP" id="MF_01184">
    <property type="entry name" value="XPRTase"/>
    <property type="match status" value="1"/>
</dbReference>
<dbReference type="InterPro" id="IPR029057">
    <property type="entry name" value="PRTase-like"/>
</dbReference>
<dbReference type="InterPro" id="IPR050118">
    <property type="entry name" value="Pur/Pyrimidine_PRTase"/>
</dbReference>
<dbReference type="InterPro" id="IPR010079">
    <property type="entry name" value="Xanthine_PRibTrfase"/>
</dbReference>
<dbReference type="NCBIfam" id="NF006671">
    <property type="entry name" value="PRK09219.1"/>
    <property type="match status" value="1"/>
</dbReference>
<dbReference type="NCBIfam" id="TIGR01744">
    <property type="entry name" value="XPRTase"/>
    <property type="match status" value="1"/>
</dbReference>
<dbReference type="PANTHER" id="PTHR43864">
    <property type="entry name" value="HYPOXANTHINE/GUANINE PHOSPHORIBOSYLTRANSFERASE"/>
    <property type="match status" value="1"/>
</dbReference>
<dbReference type="PANTHER" id="PTHR43864:SF1">
    <property type="entry name" value="XANTHINE PHOSPHORIBOSYLTRANSFERASE"/>
    <property type="match status" value="1"/>
</dbReference>
<dbReference type="SUPFAM" id="SSF53271">
    <property type="entry name" value="PRTase-like"/>
    <property type="match status" value="1"/>
</dbReference>
<keyword id="KW-0963">Cytoplasm</keyword>
<keyword id="KW-0328">Glycosyltransferase</keyword>
<keyword id="KW-0660">Purine salvage</keyword>
<keyword id="KW-1185">Reference proteome</keyword>
<keyword id="KW-0808">Transferase</keyword>
<gene>
    <name evidence="1" type="primary">xpt</name>
    <name type="ordered locus">BDI_1502</name>
</gene>
<feature type="chain" id="PRO_0000339724" description="Xanthine phosphoribosyltransferase">
    <location>
        <begin position="1"/>
        <end position="188"/>
    </location>
</feature>
<feature type="binding site" evidence="1">
    <location>
        <position position="20"/>
    </location>
    <ligand>
        <name>xanthine</name>
        <dbReference type="ChEBI" id="CHEBI:17712"/>
    </ligand>
</feature>
<feature type="binding site" evidence="1">
    <location>
        <position position="27"/>
    </location>
    <ligand>
        <name>xanthine</name>
        <dbReference type="ChEBI" id="CHEBI:17712"/>
    </ligand>
</feature>
<feature type="binding site" evidence="1">
    <location>
        <begin position="127"/>
        <end position="131"/>
    </location>
    <ligand>
        <name>5-phospho-alpha-D-ribose 1-diphosphate</name>
        <dbReference type="ChEBI" id="CHEBI:58017"/>
    </ligand>
</feature>
<feature type="binding site" evidence="1">
    <location>
        <position position="155"/>
    </location>
    <ligand>
        <name>xanthine</name>
        <dbReference type="ChEBI" id="CHEBI:17712"/>
    </ligand>
</feature>
<evidence type="ECO:0000255" key="1">
    <source>
        <dbReference type="HAMAP-Rule" id="MF_01184"/>
    </source>
</evidence>
<comment type="function">
    <text evidence="1">Converts the preformed base xanthine, a product of nucleic acid breakdown, to xanthosine 5'-monophosphate (XMP), so it can be reused for RNA or DNA synthesis.</text>
</comment>
<comment type="catalytic activity">
    <reaction evidence="1">
        <text>XMP + diphosphate = xanthine + 5-phospho-alpha-D-ribose 1-diphosphate</text>
        <dbReference type="Rhea" id="RHEA:10800"/>
        <dbReference type="ChEBI" id="CHEBI:17712"/>
        <dbReference type="ChEBI" id="CHEBI:33019"/>
        <dbReference type="ChEBI" id="CHEBI:57464"/>
        <dbReference type="ChEBI" id="CHEBI:58017"/>
        <dbReference type="EC" id="2.4.2.22"/>
    </reaction>
</comment>
<comment type="pathway">
    <text evidence="1">Purine metabolism; XMP biosynthesis via salvage pathway; XMP from xanthine: step 1/1.</text>
</comment>
<comment type="subunit">
    <text evidence="1">Homodimer.</text>
</comment>
<comment type="subcellular location">
    <subcellularLocation>
        <location evidence="1">Cytoplasm</location>
    </subcellularLocation>
</comment>
<comment type="similarity">
    <text evidence="1">Belongs to the purine/pyrimidine phosphoribosyltransferase family. Xpt subfamily.</text>
</comment>
<proteinExistence type="inferred from homology"/>
<accession>A6LC43</accession>
<organism>
    <name type="scientific">Parabacteroides distasonis (strain ATCC 8503 / DSM 20701 / CIP 104284 / JCM 5825 / NCTC 11152)</name>
    <dbReference type="NCBI Taxonomy" id="435591"/>
    <lineage>
        <taxon>Bacteria</taxon>
        <taxon>Pseudomonadati</taxon>
        <taxon>Bacteroidota</taxon>
        <taxon>Bacteroidia</taxon>
        <taxon>Bacteroidales</taxon>
        <taxon>Tannerellaceae</taxon>
        <taxon>Parabacteroides</taxon>
    </lineage>
</organism>
<name>XPT_PARD8</name>